<reference key="1">
    <citation type="journal article" date="2010" name="Genome Biol. Evol.">
        <title>Continuing evolution of Burkholderia mallei through genome reduction and large-scale rearrangements.</title>
        <authorList>
            <person name="Losada L."/>
            <person name="Ronning C.M."/>
            <person name="DeShazer D."/>
            <person name="Woods D."/>
            <person name="Fedorova N."/>
            <person name="Kim H.S."/>
            <person name="Shabalina S.A."/>
            <person name="Pearson T.R."/>
            <person name="Brinkac L."/>
            <person name="Tan P."/>
            <person name="Nandi T."/>
            <person name="Crabtree J."/>
            <person name="Badger J."/>
            <person name="Beckstrom-Sternberg S."/>
            <person name="Saqib M."/>
            <person name="Schutzer S.E."/>
            <person name="Keim P."/>
            <person name="Nierman W.C."/>
        </authorList>
    </citation>
    <scope>NUCLEOTIDE SEQUENCE [LARGE SCALE GENOMIC DNA]</scope>
    <source>
        <strain>1710b</strain>
    </source>
</reference>
<name>GRPE_BURP1</name>
<comment type="function">
    <text evidence="1">Participates actively in the response to hyperosmotic and heat shock by preventing the aggregation of stress-denatured proteins, in association with DnaK and GrpE. It is the nucleotide exchange factor for DnaK and may function as a thermosensor. Unfolded proteins bind initially to DnaJ; upon interaction with the DnaJ-bound protein, DnaK hydrolyzes its bound ATP, resulting in the formation of a stable complex. GrpE releases ADP from DnaK; ATP binding to DnaK triggers the release of the substrate protein, thus completing the reaction cycle. Several rounds of ATP-dependent interactions between DnaJ, DnaK and GrpE are required for fully efficient folding.</text>
</comment>
<comment type="subunit">
    <text evidence="1">Homodimer.</text>
</comment>
<comment type="subcellular location">
    <subcellularLocation>
        <location evidence="1">Cytoplasm</location>
    </subcellularLocation>
</comment>
<comment type="similarity">
    <text evidence="1">Belongs to the GrpE family.</text>
</comment>
<feature type="chain" id="PRO_1000053557" description="Protein GrpE">
    <location>
        <begin position="1"/>
        <end position="185"/>
    </location>
</feature>
<feature type="region of interest" description="Disordered" evidence="2">
    <location>
        <begin position="1"/>
        <end position="38"/>
    </location>
</feature>
<feature type="compositionally biased region" description="Polar residues" evidence="2">
    <location>
        <begin position="1"/>
        <end position="11"/>
    </location>
</feature>
<feature type="compositionally biased region" description="Low complexity" evidence="2">
    <location>
        <begin position="19"/>
        <end position="38"/>
    </location>
</feature>
<proteinExistence type="inferred from homology"/>
<dbReference type="EMBL" id="CP000124">
    <property type="protein sequence ID" value="ABA48156.1"/>
    <property type="molecule type" value="Genomic_DNA"/>
</dbReference>
<dbReference type="RefSeq" id="WP_004194243.1">
    <property type="nucleotide sequence ID" value="NC_007434.1"/>
</dbReference>
<dbReference type="SMR" id="Q3JP08"/>
<dbReference type="EnsemblBacteria" id="ABA48156">
    <property type="protein sequence ID" value="ABA48156"/>
    <property type="gene ID" value="BURPS1710b_3324"/>
</dbReference>
<dbReference type="GeneID" id="93061417"/>
<dbReference type="KEGG" id="bpm:BURPS1710b_3324"/>
<dbReference type="HOGENOM" id="CLU_057217_6_1_4"/>
<dbReference type="Proteomes" id="UP000002700">
    <property type="component" value="Chromosome I"/>
</dbReference>
<dbReference type="GO" id="GO:0005829">
    <property type="term" value="C:cytosol"/>
    <property type="evidence" value="ECO:0007669"/>
    <property type="project" value="TreeGrafter"/>
</dbReference>
<dbReference type="GO" id="GO:0000774">
    <property type="term" value="F:adenyl-nucleotide exchange factor activity"/>
    <property type="evidence" value="ECO:0007669"/>
    <property type="project" value="InterPro"/>
</dbReference>
<dbReference type="GO" id="GO:0042803">
    <property type="term" value="F:protein homodimerization activity"/>
    <property type="evidence" value="ECO:0007669"/>
    <property type="project" value="InterPro"/>
</dbReference>
<dbReference type="GO" id="GO:0051087">
    <property type="term" value="F:protein-folding chaperone binding"/>
    <property type="evidence" value="ECO:0007669"/>
    <property type="project" value="InterPro"/>
</dbReference>
<dbReference type="GO" id="GO:0051082">
    <property type="term" value="F:unfolded protein binding"/>
    <property type="evidence" value="ECO:0007669"/>
    <property type="project" value="TreeGrafter"/>
</dbReference>
<dbReference type="GO" id="GO:0006457">
    <property type="term" value="P:protein folding"/>
    <property type="evidence" value="ECO:0007669"/>
    <property type="project" value="InterPro"/>
</dbReference>
<dbReference type="CDD" id="cd00446">
    <property type="entry name" value="GrpE"/>
    <property type="match status" value="1"/>
</dbReference>
<dbReference type="FunFam" id="2.30.22.10:FF:000001">
    <property type="entry name" value="Protein GrpE"/>
    <property type="match status" value="1"/>
</dbReference>
<dbReference type="Gene3D" id="3.90.20.20">
    <property type="match status" value="1"/>
</dbReference>
<dbReference type="Gene3D" id="2.30.22.10">
    <property type="entry name" value="Head domain of nucleotide exchange factor GrpE"/>
    <property type="match status" value="1"/>
</dbReference>
<dbReference type="HAMAP" id="MF_01151">
    <property type="entry name" value="GrpE"/>
    <property type="match status" value="1"/>
</dbReference>
<dbReference type="InterPro" id="IPR000740">
    <property type="entry name" value="GrpE"/>
</dbReference>
<dbReference type="InterPro" id="IPR013805">
    <property type="entry name" value="GrpE_coiled_coil"/>
</dbReference>
<dbReference type="InterPro" id="IPR009012">
    <property type="entry name" value="GrpE_head"/>
</dbReference>
<dbReference type="NCBIfam" id="NF010737">
    <property type="entry name" value="PRK14139.1"/>
    <property type="match status" value="1"/>
</dbReference>
<dbReference type="NCBIfam" id="NF010738">
    <property type="entry name" value="PRK14140.1"/>
    <property type="match status" value="1"/>
</dbReference>
<dbReference type="NCBIfam" id="NF010748">
    <property type="entry name" value="PRK14150.1"/>
    <property type="match status" value="1"/>
</dbReference>
<dbReference type="PANTHER" id="PTHR21237">
    <property type="entry name" value="GRPE PROTEIN"/>
    <property type="match status" value="1"/>
</dbReference>
<dbReference type="PANTHER" id="PTHR21237:SF23">
    <property type="entry name" value="GRPE PROTEIN HOMOLOG, MITOCHONDRIAL"/>
    <property type="match status" value="1"/>
</dbReference>
<dbReference type="Pfam" id="PF01025">
    <property type="entry name" value="GrpE"/>
    <property type="match status" value="1"/>
</dbReference>
<dbReference type="PRINTS" id="PR00773">
    <property type="entry name" value="GRPEPROTEIN"/>
</dbReference>
<dbReference type="SUPFAM" id="SSF58014">
    <property type="entry name" value="Coiled-coil domain of nucleotide exchange factor GrpE"/>
    <property type="match status" value="1"/>
</dbReference>
<dbReference type="SUPFAM" id="SSF51064">
    <property type="entry name" value="Head domain of nucleotide exchange factor GrpE"/>
    <property type="match status" value="1"/>
</dbReference>
<dbReference type="PROSITE" id="PS01071">
    <property type="entry name" value="GRPE"/>
    <property type="match status" value="1"/>
</dbReference>
<organism>
    <name type="scientific">Burkholderia pseudomallei (strain 1710b)</name>
    <dbReference type="NCBI Taxonomy" id="320372"/>
    <lineage>
        <taxon>Bacteria</taxon>
        <taxon>Pseudomonadati</taxon>
        <taxon>Pseudomonadota</taxon>
        <taxon>Betaproteobacteria</taxon>
        <taxon>Burkholderiales</taxon>
        <taxon>Burkholderiaceae</taxon>
        <taxon>Burkholderia</taxon>
        <taxon>pseudomallei group</taxon>
    </lineage>
</organism>
<accession>Q3JP08</accession>
<gene>
    <name evidence="1" type="primary">grpE</name>
    <name type="ordered locus">BURPS1710b_3324</name>
</gene>
<protein>
    <recommendedName>
        <fullName evidence="1">Protein GrpE</fullName>
    </recommendedName>
    <alternativeName>
        <fullName evidence="1">HSP-70 cofactor</fullName>
    </alternativeName>
</protein>
<sequence>MENTQENPTDQTTEETGREAQAAEPAAQAAENAAPAAEAALAEAQAKIAELQESFLRAKAETENVRRRAQDDVAKAHKFAIEGFAENLLPVLDSLEAAVGDTSGDLAKVREGVELTLRQLTSALEKGRVAALNPVGEKFDPHLHQAISMVPADQEPNTVVAVLQKGYTIADRVLRPALVTVAQPK</sequence>
<evidence type="ECO:0000255" key="1">
    <source>
        <dbReference type="HAMAP-Rule" id="MF_01151"/>
    </source>
</evidence>
<evidence type="ECO:0000256" key="2">
    <source>
        <dbReference type="SAM" id="MobiDB-lite"/>
    </source>
</evidence>
<keyword id="KW-0143">Chaperone</keyword>
<keyword id="KW-0963">Cytoplasm</keyword>
<keyword id="KW-0346">Stress response</keyword>